<dbReference type="EC" id="2.4.1.-"/>
<dbReference type="EMBL" id="DS231670">
    <property type="protein sequence ID" value="ESU17817.1"/>
    <property type="status" value="ALT_SEQ"/>
    <property type="molecule type" value="Genomic_DNA"/>
</dbReference>
<dbReference type="EMBL" id="HG970334">
    <property type="protein sequence ID" value="SCB64974.1"/>
    <property type="status" value="ALT_SEQ"/>
    <property type="molecule type" value="Genomic_DNA"/>
</dbReference>
<dbReference type="RefSeq" id="XP_011325439.1">
    <property type="nucleotide sequence ID" value="XM_011327137.1"/>
</dbReference>
<dbReference type="SMR" id="Q4HVS2"/>
<dbReference type="FunCoup" id="Q4HVS2">
    <property type="interactions" value="16"/>
</dbReference>
<dbReference type="STRING" id="229533.Q4HVS2"/>
<dbReference type="GlyCosmos" id="Q4HVS2">
    <property type="glycosylation" value="2 sites, No reported glycans"/>
</dbReference>
<dbReference type="GeneID" id="23557813"/>
<dbReference type="KEGG" id="fgr:FGSG_10936"/>
<dbReference type="VEuPathDB" id="FungiDB:FGRAMPH1_01G20841"/>
<dbReference type="eggNOG" id="KOG1950">
    <property type="taxonomic scope" value="Eukaryota"/>
</dbReference>
<dbReference type="HOGENOM" id="CLU_034860_2_1_1"/>
<dbReference type="InParanoid" id="Q4HVS2"/>
<dbReference type="OrthoDB" id="93968at110618"/>
<dbReference type="Proteomes" id="UP000070720">
    <property type="component" value="Chromosome 3"/>
</dbReference>
<dbReference type="GO" id="GO:0000139">
    <property type="term" value="C:Golgi membrane"/>
    <property type="evidence" value="ECO:0007669"/>
    <property type="project" value="UniProtKB-SubCell"/>
</dbReference>
<dbReference type="GO" id="GO:0005774">
    <property type="term" value="C:vacuolar membrane"/>
    <property type="evidence" value="ECO:0007669"/>
    <property type="project" value="UniProtKB-SubCell"/>
</dbReference>
<dbReference type="GO" id="GO:0016740">
    <property type="term" value="F:transferase activity"/>
    <property type="evidence" value="ECO:0007669"/>
    <property type="project" value="UniProtKB-KW"/>
</dbReference>
<dbReference type="Gene3D" id="3.90.550.10">
    <property type="entry name" value="Spore Coat Polysaccharide Biosynthesis Protein SpsA, Chain A"/>
    <property type="match status" value="1"/>
</dbReference>
<dbReference type="InterPro" id="IPR050587">
    <property type="entry name" value="GNT1/Glycosyltrans_8"/>
</dbReference>
<dbReference type="InterPro" id="IPR029044">
    <property type="entry name" value="Nucleotide-diphossugar_trans"/>
</dbReference>
<dbReference type="PANTHER" id="PTHR11183">
    <property type="entry name" value="GLYCOGENIN SUBFAMILY MEMBER"/>
    <property type="match status" value="1"/>
</dbReference>
<dbReference type="SUPFAM" id="SSF53448">
    <property type="entry name" value="Nucleotide-diphospho-sugar transferases"/>
    <property type="match status" value="1"/>
</dbReference>
<comment type="function">
    <text evidence="1">N-acetylglucosaminyltransferase involved in the Golgi-specific modification of N-linked glycans.</text>
</comment>
<comment type="subcellular location">
    <subcellularLocation>
        <location evidence="1">Golgi apparatus membrane</location>
        <topology evidence="1">Single-pass type II membrane protein</topology>
    </subcellularLocation>
    <subcellularLocation>
        <location evidence="1">Vacuole membrane</location>
        <topology evidence="1">Single-pass type II membrane protein</topology>
    </subcellularLocation>
</comment>
<comment type="similarity">
    <text evidence="4">Belongs to the GNT1 family.</text>
</comment>
<comment type="sequence caution" evidence="4">
    <conflict type="erroneous gene model prediction">
        <sequence resource="EMBL-CDS" id="ESU17817"/>
    </conflict>
</comment>
<comment type="sequence caution" evidence="4">
    <conflict type="erroneous gene model prediction">
        <sequence resource="EMBL-CDS" id="SCB64974"/>
    </conflict>
</comment>
<proteinExistence type="inferred from homology"/>
<organism>
    <name type="scientific">Gibberella zeae (strain ATCC MYA-4620 / CBS 123657 / FGSC 9075 / NRRL 31084 / PH-1)</name>
    <name type="common">Wheat head blight fungus</name>
    <name type="synonym">Fusarium graminearum</name>
    <dbReference type="NCBI Taxonomy" id="229533"/>
    <lineage>
        <taxon>Eukaryota</taxon>
        <taxon>Fungi</taxon>
        <taxon>Dikarya</taxon>
        <taxon>Ascomycota</taxon>
        <taxon>Pezizomycotina</taxon>
        <taxon>Sordariomycetes</taxon>
        <taxon>Hypocreomycetidae</taxon>
        <taxon>Hypocreales</taxon>
        <taxon>Nectriaceae</taxon>
        <taxon>Fusarium</taxon>
    </lineage>
</organism>
<feature type="chain" id="PRO_0000087535" description="Glucose N-acetyltransferase 1">
    <location>
        <begin position="1"/>
        <end position="450"/>
    </location>
</feature>
<feature type="topological domain" description="Cytoplasmic" evidence="2">
    <location>
        <begin position="1"/>
        <end position="14"/>
    </location>
</feature>
<feature type="transmembrane region" description="Helical; Signal-anchor for type II membrane protein" evidence="2">
    <location>
        <begin position="15"/>
        <end position="35"/>
    </location>
</feature>
<feature type="topological domain" description="Lumenal" evidence="2">
    <location>
        <begin position="36"/>
        <end position="450"/>
    </location>
</feature>
<feature type="region of interest" description="Disordered" evidence="3">
    <location>
        <begin position="122"/>
        <end position="148"/>
    </location>
</feature>
<feature type="short sequence motif" description="DXD">
    <location>
        <begin position="258"/>
        <end position="260"/>
    </location>
</feature>
<feature type="compositionally biased region" description="Acidic residues" evidence="3">
    <location>
        <begin position="123"/>
        <end position="148"/>
    </location>
</feature>
<feature type="glycosylation site" description="N-linked (GlcNAc...) asparagine" evidence="2">
    <location>
        <position position="218"/>
    </location>
</feature>
<feature type="glycosylation site" description="N-linked (GlcNAc...) asparagine" evidence="2">
    <location>
        <position position="247"/>
    </location>
</feature>
<gene>
    <name type="primary">GNT1</name>
    <name type="ORF">FGRAMPH1_01T20841</name>
    <name type="ORF">FGRRES_17495</name>
    <name type="ORF">FGSG_10936</name>
</gene>
<keyword id="KW-0325">Glycoprotein</keyword>
<keyword id="KW-0333">Golgi apparatus</keyword>
<keyword id="KW-0472">Membrane</keyword>
<keyword id="KW-1185">Reference proteome</keyword>
<keyword id="KW-0735">Signal-anchor</keyword>
<keyword id="KW-0808">Transferase</keyword>
<keyword id="KW-0812">Transmembrane</keyword>
<keyword id="KW-1133">Transmembrane helix</keyword>
<keyword id="KW-0926">Vacuole</keyword>
<evidence type="ECO:0000250" key="1"/>
<evidence type="ECO:0000255" key="2"/>
<evidence type="ECO:0000256" key="3">
    <source>
        <dbReference type="SAM" id="MobiDB-lite"/>
    </source>
</evidence>
<evidence type="ECO:0000305" key="4"/>
<accession>Q4HVS2</accession>
<accession>A0A0E0SIU1</accession>
<accession>A0A1C3YKA4</accession>
<accession>I1S2E4</accession>
<reference key="1">
    <citation type="journal article" date="2007" name="Science">
        <title>The Fusarium graminearum genome reveals a link between localized polymorphism and pathogen specialization.</title>
        <authorList>
            <person name="Cuomo C.A."/>
            <person name="Gueldener U."/>
            <person name="Xu J.-R."/>
            <person name="Trail F."/>
            <person name="Turgeon B.G."/>
            <person name="Di Pietro A."/>
            <person name="Walton J.D."/>
            <person name="Ma L.-J."/>
            <person name="Baker S.E."/>
            <person name="Rep M."/>
            <person name="Adam G."/>
            <person name="Antoniw J."/>
            <person name="Baldwin T."/>
            <person name="Calvo S.E."/>
            <person name="Chang Y.-L."/>
            <person name="DeCaprio D."/>
            <person name="Gale L.R."/>
            <person name="Gnerre S."/>
            <person name="Goswami R.S."/>
            <person name="Hammond-Kosack K."/>
            <person name="Harris L.J."/>
            <person name="Hilburn K."/>
            <person name="Kennell J.C."/>
            <person name="Kroken S."/>
            <person name="Magnuson J.K."/>
            <person name="Mannhaupt G."/>
            <person name="Mauceli E.W."/>
            <person name="Mewes H.-W."/>
            <person name="Mitterbauer R."/>
            <person name="Muehlbauer G."/>
            <person name="Muensterkoetter M."/>
            <person name="Nelson D."/>
            <person name="O'Donnell K."/>
            <person name="Ouellet T."/>
            <person name="Qi W."/>
            <person name="Quesneville H."/>
            <person name="Roncero M.I.G."/>
            <person name="Seong K.-Y."/>
            <person name="Tetko I.V."/>
            <person name="Urban M."/>
            <person name="Waalwijk C."/>
            <person name="Ward T.J."/>
            <person name="Yao J."/>
            <person name="Birren B.W."/>
            <person name="Kistler H.C."/>
        </authorList>
    </citation>
    <scope>NUCLEOTIDE SEQUENCE [LARGE SCALE GENOMIC DNA]</scope>
    <source>
        <strain>ATCC MYA-4620 / CBS 123657 / FGSC 9075 / NRRL 31084 / PH-1</strain>
    </source>
</reference>
<reference key="2">
    <citation type="journal article" date="2010" name="Nature">
        <title>Comparative genomics reveals mobile pathogenicity chromosomes in Fusarium.</title>
        <authorList>
            <person name="Ma L.-J."/>
            <person name="van der Does H.C."/>
            <person name="Borkovich K.A."/>
            <person name="Coleman J.J."/>
            <person name="Daboussi M.-J."/>
            <person name="Di Pietro A."/>
            <person name="Dufresne M."/>
            <person name="Freitag M."/>
            <person name="Grabherr M."/>
            <person name="Henrissat B."/>
            <person name="Houterman P.M."/>
            <person name="Kang S."/>
            <person name="Shim W.-B."/>
            <person name="Woloshuk C."/>
            <person name="Xie X."/>
            <person name="Xu J.-R."/>
            <person name="Antoniw J."/>
            <person name="Baker S.E."/>
            <person name="Bluhm B.H."/>
            <person name="Breakspear A."/>
            <person name="Brown D.W."/>
            <person name="Butchko R.A.E."/>
            <person name="Chapman S."/>
            <person name="Coulson R."/>
            <person name="Coutinho P.M."/>
            <person name="Danchin E.G.J."/>
            <person name="Diener A."/>
            <person name="Gale L.R."/>
            <person name="Gardiner D.M."/>
            <person name="Goff S."/>
            <person name="Hammond-Kosack K.E."/>
            <person name="Hilburn K."/>
            <person name="Hua-Van A."/>
            <person name="Jonkers W."/>
            <person name="Kazan K."/>
            <person name="Kodira C.D."/>
            <person name="Koehrsen M."/>
            <person name="Kumar L."/>
            <person name="Lee Y.-H."/>
            <person name="Li L."/>
            <person name="Manners J.M."/>
            <person name="Miranda-Saavedra D."/>
            <person name="Mukherjee M."/>
            <person name="Park G."/>
            <person name="Park J."/>
            <person name="Park S.-Y."/>
            <person name="Proctor R.H."/>
            <person name="Regev A."/>
            <person name="Ruiz-Roldan M.C."/>
            <person name="Sain D."/>
            <person name="Sakthikumar S."/>
            <person name="Sykes S."/>
            <person name="Schwartz D.C."/>
            <person name="Turgeon B.G."/>
            <person name="Wapinski I."/>
            <person name="Yoder O."/>
            <person name="Young S."/>
            <person name="Zeng Q."/>
            <person name="Zhou S."/>
            <person name="Galagan J."/>
            <person name="Cuomo C.A."/>
            <person name="Kistler H.C."/>
            <person name="Rep M."/>
        </authorList>
    </citation>
    <scope>GENOME REANNOTATION</scope>
    <source>
        <strain>ATCC MYA-4620 / CBS 123657 / FGSC 9075 / NRRL 31084 / PH-1</strain>
    </source>
</reference>
<reference key="3">
    <citation type="journal article" date="2015" name="BMC Genomics">
        <title>The completed genome sequence of the pathogenic ascomycete fungus Fusarium graminearum.</title>
        <authorList>
            <person name="King R."/>
            <person name="Urban M."/>
            <person name="Hammond-Kosack M.C.U."/>
            <person name="Hassani-Pak K."/>
            <person name="Hammond-Kosack K.E."/>
        </authorList>
    </citation>
    <scope>NUCLEOTIDE SEQUENCE [LARGE SCALE GENOMIC DNA]</scope>
    <source>
        <strain>ATCC MYA-4620 / CBS 123657 / FGSC 9075 / NRRL 31084 / PH-1</strain>
    </source>
</reference>
<sequence>MGEASSFVAVRLMRIIPILAILGATYYIFLTCFASFQATDVPVPEEWRNHDAVVDEVDEITETLTHDPDSRPTPHKLTIAEIEDLENKGEFMGFEDEDEIDVFINLDDDGDWEEDDLKKELGDELEGDFEDEEDEDFGDDDDDDDNDDDVDWSRFAYIQYVTNEDYLCNSVMIFEQLHRLGSKADRLLMYPKEMLEPDAAYSNKRGGQLLIRARDEYNVTLQPIEIQHRDGQDETWADSFTKLLAFNQTQYDRVLSLDSDSMVLQHMDELFQLPPCPVAMPRAYWLYNENPPKRILSSQVMLIQPDDVEFERIVQKMNSIGPNDYDMEIVNSLYLDSALILPHRKYDMLTAEFRNKDHTAYLGSEREKWDSSVALSEAKFVHFSDWPVPKPWINDVETRLANQPDCPEGETSCPDRDIWNGFYTDFTDNKKRVCESVGKTGQKWIHWRRM</sequence>
<protein>
    <recommendedName>
        <fullName>Glucose N-acetyltransferase 1</fullName>
        <ecNumber>2.4.1.-</ecNumber>
    </recommendedName>
    <alternativeName>
        <fullName>N-acetylglucosaminyltransferase</fullName>
    </alternativeName>
</protein>
<name>GNT1_GIBZE</name>